<keyword id="KW-0067">ATP-binding</keyword>
<keyword id="KW-0418">Kinase</keyword>
<keyword id="KW-0545">Nucleotide biosynthesis</keyword>
<keyword id="KW-0547">Nucleotide-binding</keyword>
<keyword id="KW-1185">Reference proteome</keyword>
<keyword id="KW-0808">Transferase</keyword>
<organism>
    <name type="scientific">Streptococcus sanguinis (strain SK36)</name>
    <dbReference type="NCBI Taxonomy" id="388919"/>
    <lineage>
        <taxon>Bacteria</taxon>
        <taxon>Bacillati</taxon>
        <taxon>Bacillota</taxon>
        <taxon>Bacilli</taxon>
        <taxon>Lactobacillales</taxon>
        <taxon>Streptococcaceae</taxon>
        <taxon>Streptococcus</taxon>
    </lineage>
</organism>
<name>KTHY_STRSV</name>
<sequence>MKNGILISLEGPEGAGKSSVLEALLPFLQNYGTGLITTREPGGVQIAEAIREVILEPSHTAMDAKTELLLYIASRRQHLTERVLPALAQGKLVLMDRFIDSSVAYQGYGRGLDVADIEWLNQFATDGLKPDLTLYFDIDVEEGLARIAKSESREVNRLDLEGLDLHQRVRQGYLAILDKEPERFVKVDASQPLDKVVADSLAIIQERFGNPS</sequence>
<reference key="1">
    <citation type="journal article" date="2007" name="J. Bacteriol.">
        <title>Genome of the opportunistic pathogen Streptococcus sanguinis.</title>
        <authorList>
            <person name="Xu P."/>
            <person name="Alves J.M."/>
            <person name="Kitten T."/>
            <person name="Brown A."/>
            <person name="Chen Z."/>
            <person name="Ozaki L.S."/>
            <person name="Manque P."/>
            <person name="Ge X."/>
            <person name="Serrano M.G."/>
            <person name="Puiu D."/>
            <person name="Hendricks S."/>
            <person name="Wang Y."/>
            <person name="Chaplin M.D."/>
            <person name="Akan D."/>
            <person name="Paik S."/>
            <person name="Peterson D.L."/>
            <person name="Macrina F.L."/>
            <person name="Buck G.A."/>
        </authorList>
    </citation>
    <scope>NUCLEOTIDE SEQUENCE [LARGE SCALE GENOMIC DNA]</scope>
    <source>
        <strain>SK36</strain>
    </source>
</reference>
<accession>A3CPJ9</accession>
<proteinExistence type="inferred from homology"/>
<protein>
    <recommendedName>
        <fullName evidence="1">Thymidylate kinase</fullName>
        <ecNumber evidence="1">2.7.4.9</ecNumber>
    </recommendedName>
    <alternativeName>
        <fullName evidence="1">dTMP kinase</fullName>
    </alternativeName>
</protein>
<dbReference type="EC" id="2.7.4.9" evidence="1"/>
<dbReference type="EMBL" id="CP000387">
    <property type="protein sequence ID" value="ABN45104.1"/>
    <property type="molecule type" value="Genomic_DNA"/>
</dbReference>
<dbReference type="RefSeq" id="WP_002923625.1">
    <property type="nucleotide sequence ID" value="NC_009009.1"/>
</dbReference>
<dbReference type="RefSeq" id="YP_001035654.1">
    <property type="nucleotide sequence ID" value="NC_009009.1"/>
</dbReference>
<dbReference type="SMR" id="A3CPJ9"/>
<dbReference type="STRING" id="388919.SSA_1722"/>
<dbReference type="KEGG" id="ssa:SSA_1722"/>
<dbReference type="PATRIC" id="fig|388919.9.peg.1631"/>
<dbReference type="eggNOG" id="COG0125">
    <property type="taxonomic scope" value="Bacteria"/>
</dbReference>
<dbReference type="HOGENOM" id="CLU_049131_0_2_9"/>
<dbReference type="OrthoDB" id="9774907at2"/>
<dbReference type="Proteomes" id="UP000002148">
    <property type="component" value="Chromosome"/>
</dbReference>
<dbReference type="GO" id="GO:0005829">
    <property type="term" value="C:cytosol"/>
    <property type="evidence" value="ECO:0007669"/>
    <property type="project" value="TreeGrafter"/>
</dbReference>
<dbReference type="GO" id="GO:0005524">
    <property type="term" value="F:ATP binding"/>
    <property type="evidence" value="ECO:0007669"/>
    <property type="project" value="UniProtKB-UniRule"/>
</dbReference>
<dbReference type="GO" id="GO:0004798">
    <property type="term" value="F:dTMP kinase activity"/>
    <property type="evidence" value="ECO:0007669"/>
    <property type="project" value="UniProtKB-UniRule"/>
</dbReference>
<dbReference type="GO" id="GO:0006233">
    <property type="term" value="P:dTDP biosynthetic process"/>
    <property type="evidence" value="ECO:0007669"/>
    <property type="project" value="InterPro"/>
</dbReference>
<dbReference type="GO" id="GO:0006235">
    <property type="term" value="P:dTTP biosynthetic process"/>
    <property type="evidence" value="ECO:0007669"/>
    <property type="project" value="UniProtKB-UniRule"/>
</dbReference>
<dbReference type="GO" id="GO:0006227">
    <property type="term" value="P:dUDP biosynthetic process"/>
    <property type="evidence" value="ECO:0007669"/>
    <property type="project" value="TreeGrafter"/>
</dbReference>
<dbReference type="CDD" id="cd01672">
    <property type="entry name" value="TMPK"/>
    <property type="match status" value="1"/>
</dbReference>
<dbReference type="FunFam" id="3.40.50.300:FF:000225">
    <property type="entry name" value="Thymidylate kinase"/>
    <property type="match status" value="1"/>
</dbReference>
<dbReference type="Gene3D" id="3.40.50.300">
    <property type="entry name" value="P-loop containing nucleotide triphosphate hydrolases"/>
    <property type="match status" value="1"/>
</dbReference>
<dbReference type="HAMAP" id="MF_00165">
    <property type="entry name" value="Thymidylate_kinase"/>
    <property type="match status" value="1"/>
</dbReference>
<dbReference type="InterPro" id="IPR027417">
    <property type="entry name" value="P-loop_NTPase"/>
</dbReference>
<dbReference type="InterPro" id="IPR039430">
    <property type="entry name" value="Thymidylate_kin-like_dom"/>
</dbReference>
<dbReference type="InterPro" id="IPR018095">
    <property type="entry name" value="Thymidylate_kin_CS"/>
</dbReference>
<dbReference type="InterPro" id="IPR018094">
    <property type="entry name" value="Thymidylate_kinase"/>
</dbReference>
<dbReference type="NCBIfam" id="TIGR00041">
    <property type="entry name" value="DTMP_kinase"/>
    <property type="match status" value="1"/>
</dbReference>
<dbReference type="PANTHER" id="PTHR10344">
    <property type="entry name" value="THYMIDYLATE KINASE"/>
    <property type="match status" value="1"/>
</dbReference>
<dbReference type="PANTHER" id="PTHR10344:SF4">
    <property type="entry name" value="UMP-CMP KINASE 2, MITOCHONDRIAL"/>
    <property type="match status" value="1"/>
</dbReference>
<dbReference type="Pfam" id="PF02223">
    <property type="entry name" value="Thymidylate_kin"/>
    <property type="match status" value="1"/>
</dbReference>
<dbReference type="SUPFAM" id="SSF52540">
    <property type="entry name" value="P-loop containing nucleoside triphosphate hydrolases"/>
    <property type="match status" value="1"/>
</dbReference>
<dbReference type="PROSITE" id="PS01331">
    <property type="entry name" value="THYMIDYLATE_KINASE"/>
    <property type="match status" value="1"/>
</dbReference>
<feature type="chain" id="PRO_1000023296" description="Thymidylate kinase">
    <location>
        <begin position="1"/>
        <end position="212"/>
    </location>
</feature>
<feature type="binding site" evidence="1">
    <location>
        <begin position="11"/>
        <end position="18"/>
    </location>
    <ligand>
        <name>ATP</name>
        <dbReference type="ChEBI" id="CHEBI:30616"/>
    </ligand>
</feature>
<evidence type="ECO:0000255" key="1">
    <source>
        <dbReference type="HAMAP-Rule" id="MF_00165"/>
    </source>
</evidence>
<comment type="function">
    <text evidence="1">Phosphorylation of dTMP to form dTDP in both de novo and salvage pathways of dTTP synthesis.</text>
</comment>
<comment type="catalytic activity">
    <reaction evidence="1">
        <text>dTMP + ATP = dTDP + ADP</text>
        <dbReference type="Rhea" id="RHEA:13517"/>
        <dbReference type="ChEBI" id="CHEBI:30616"/>
        <dbReference type="ChEBI" id="CHEBI:58369"/>
        <dbReference type="ChEBI" id="CHEBI:63528"/>
        <dbReference type="ChEBI" id="CHEBI:456216"/>
        <dbReference type="EC" id="2.7.4.9"/>
    </reaction>
</comment>
<comment type="similarity">
    <text evidence="1">Belongs to the thymidylate kinase family.</text>
</comment>
<gene>
    <name evidence="1" type="primary">tmk</name>
    <name type="ordered locus">SSA_1722</name>
</gene>